<name>RISB_VIBVU</name>
<gene>
    <name evidence="1" type="primary">ribH</name>
    <name type="ordered locus">VV1_0319</name>
</gene>
<dbReference type="EC" id="2.5.1.78" evidence="1"/>
<dbReference type="EMBL" id="AE016795">
    <property type="protein sequence ID" value="AAO08849.1"/>
    <property type="molecule type" value="Genomic_DNA"/>
</dbReference>
<dbReference type="SMR" id="Q8DF99"/>
<dbReference type="KEGG" id="vvu:VV1_0319"/>
<dbReference type="HOGENOM" id="CLU_089358_1_1_6"/>
<dbReference type="UniPathway" id="UPA00275">
    <property type="reaction ID" value="UER00404"/>
</dbReference>
<dbReference type="Proteomes" id="UP000002275">
    <property type="component" value="Chromosome 1"/>
</dbReference>
<dbReference type="GO" id="GO:0005829">
    <property type="term" value="C:cytosol"/>
    <property type="evidence" value="ECO:0007669"/>
    <property type="project" value="TreeGrafter"/>
</dbReference>
<dbReference type="GO" id="GO:0009349">
    <property type="term" value="C:riboflavin synthase complex"/>
    <property type="evidence" value="ECO:0007669"/>
    <property type="project" value="InterPro"/>
</dbReference>
<dbReference type="GO" id="GO:0000906">
    <property type="term" value="F:6,7-dimethyl-8-ribityllumazine synthase activity"/>
    <property type="evidence" value="ECO:0007669"/>
    <property type="project" value="UniProtKB-UniRule"/>
</dbReference>
<dbReference type="GO" id="GO:0009231">
    <property type="term" value="P:riboflavin biosynthetic process"/>
    <property type="evidence" value="ECO:0007669"/>
    <property type="project" value="UniProtKB-UniRule"/>
</dbReference>
<dbReference type="CDD" id="cd09209">
    <property type="entry name" value="Lumazine_synthase-I"/>
    <property type="match status" value="1"/>
</dbReference>
<dbReference type="FunFam" id="3.40.50.960:FF:000001">
    <property type="entry name" value="6,7-dimethyl-8-ribityllumazine synthase"/>
    <property type="match status" value="1"/>
</dbReference>
<dbReference type="Gene3D" id="3.40.50.960">
    <property type="entry name" value="Lumazine/riboflavin synthase"/>
    <property type="match status" value="1"/>
</dbReference>
<dbReference type="HAMAP" id="MF_00178">
    <property type="entry name" value="Lumazine_synth"/>
    <property type="match status" value="1"/>
</dbReference>
<dbReference type="InterPro" id="IPR034964">
    <property type="entry name" value="LS"/>
</dbReference>
<dbReference type="InterPro" id="IPR002180">
    <property type="entry name" value="LS/RS"/>
</dbReference>
<dbReference type="InterPro" id="IPR036467">
    <property type="entry name" value="LS/RS_sf"/>
</dbReference>
<dbReference type="NCBIfam" id="TIGR00114">
    <property type="entry name" value="lumazine-synth"/>
    <property type="match status" value="1"/>
</dbReference>
<dbReference type="NCBIfam" id="NF000812">
    <property type="entry name" value="PRK00061.1-4"/>
    <property type="match status" value="1"/>
</dbReference>
<dbReference type="PANTHER" id="PTHR21058:SF0">
    <property type="entry name" value="6,7-DIMETHYL-8-RIBITYLLUMAZINE SYNTHASE"/>
    <property type="match status" value="1"/>
</dbReference>
<dbReference type="PANTHER" id="PTHR21058">
    <property type="entry name" value="6,7-DIMETHYL-8-RIBITYLLUMAZINE SYNTHASE DMRL SYNTHASE LUMAZINE SYNTHASE"/>
    <property type="match status" value="1"/>
</dbReference>
<dbReference type="Pfam" id="PF00885">
    <property type="entry name" value="DMRL_synthase"/>
    <property type="match status" value="1"/>
</dbReference>
<dbReference type="SUPFAM" id="SSF52121">
    <property type="entry name" value="Lumazine synthase"/>
    <property type="match status" value="1"/>
</dbReference>
<evidence type="ECO:0000255" key="1">
    <source>
        <dbReference type="HAMAP-Rule" id="MF_00178"/>
    </source>
</evidence>
<accession>Q8DF99</accession>
<reference key="1">
    <citation type="submission" date="2002-12" db="EMBL/GenBank/DDBJ databases">
        <title>Complete genome sequence of Vibrio vulnificus CMCP6.</title>
        <authorList>
            <person name="Rhee J.H."/>
            <person name="Kim S.Y."/>
            <person name="Chung S.S."/>
            <person name="Kim J.J."/>
            <person name="Moon Y.H."/>
            <person name="Jeong H."/>
            <person name="Choy H.E."/>
        </authorList>
    </citation>
    <scope>NUCLEOTIDE SEQUENCE [LARGE SCALE GENOMIC DNA]</scope>
    <source>
        <strain>CMCP6</strain>
    </source>
</reference>
<keyword id="KW-0686">Riboflavin biosynthesis</keyword>
<keyword id="KW-0808">Transferase</keyword>
<comment type="function">
    <text evidence="1">Catalyzes the formation of 6,7-dimethyl-8-ribityllumazine by condensation of 5-amino-6-(D-ribitylamino)uracil with 3,4-dihydroxy-2-butanone 4-phosphate. This is the penultimate step in the biosynthesis of riboflavin.</text>
</comment>
<comment type="catalytic activity">
    <reaction evidence="1">
        <text>(2S)-2-hydroxy-3-oxobutyl phosphate + 5-amino-6-(D-ribitylamino)uracil = 6,7-dimethyl-8-(1-D-ribityl)lumazine + phosphate + 2 H2O + H(+)</text>
        <dbReference type="Rhea" id="RHEA:26152"/>
        <dbReference type="ChEBI" id="CHEBI:15377"/>
        <dbReference type="ChEBI" id="CHEBI:15378"/>
        <dbReference type="ChEBI" id="CHEBI:15934"/>
        <dbReference type="ChEBI" id="CHEBI:43474"/>
        <dbReference type="ChEBI" id="CHEBI:58201"/>
        <dbReference type="ChEBI" id="CHEBI:58830"/>
        <dbReference type="EC" id="2.5.1.78"/>
    </reaction>
</comment>
<comment type="pathway">
    <text evidence="1">Cofactor biosynthesis; riboflavin biosynthesis; riboflavin from 2-hydroxy-3-oxobutyl phosphate and 5-amino-6-(D-ribitylamino)uracil: step 1/2.</text>
</comment>
<comment type="subunit">
    <text evidence="1">Forms an icosahedral capsid composed of 60 subunits, arranged as a dodecamer of pentamers.</text>
</comment>
<comment type="similarity">
    <text evidence="1">Belongs to the DMRL synthase family.</text>
</comment>
<sequence>MKVIEGGFPAPNAKIAIVISRFNSFINESLLSGAIDTLKRHGQVSEDNITVVRCPGAVELPLVAQRVAKTGKFDAIVSLGSVIRGGTPHFDYVCSEMNKGLAQVSLEFSIPVAFGVLTVDTIDQAIERAGTKAGNKGAEAALSALEMINVLSEIDS</sequence>
<proteinExistence type="inferred from homology"/>
<protein>
    <recommendedName>
        <fullName evidence="1">6,7-dimethyl-8-ribityllumazine synthase</fullName>
        <shortName evidence="1">DMRL synthase</shortName>
        <shortName evidence="1">LS</shortName>
        <shortName evidence="1">Lumazine synthase</shortName>
        <ecNumber evidence="1">2.5.1.78</ecNumber>
    </recommendedName>
</protein>
<feature type="chain" id="PRO_0000134829" description="6,7-dimethyl-8-ribityllumazine synthase">
    <location>
        <begin position="1"/>
        <end position="156"/>
    </location>
</feature>
<feature type="active site" description="Proton donor" evidence="1">
    <location>
        <position position="89"/>
    </location>
</feature>
<feature type="binding site" evidence="1">
    <location>
        <position position="22"/>
    </location>
    <ligand>
        <name>5-amino-6-(D-ribitylamino)uracil</name>
        <dbReference type="ChEBI" id="CHEBI:15934"/>
    </ligand>
</feature>
<feature type="binding site" evidence="1">
    <location>
        <begin position="57"/>
        <end position="59"/>
    </location>
    <ligand>
        <name>5-amino-6-(D-ribitylamino)uracil</name>
        <dbReference type="ChEBI" id="CHEBI:15934"/>
    </ligand>
</feature>
<feature type="binding site" evidence="1">
    <location>
        <begin position="81"/>
        <end position="83"/>
    </location>
    <ligand>
        <name>5-amino-6-(D-ribitylamino)uracil</name>
        <dbReference type="ChEBI" id="CHEBI:15934"/>
    </ligand>
</feature>
<feature type="binding site" evidence="1">
    <location>
        <begin position="86"/>
        <end position="87"/>
    </location>
    <ligand>
        <name>(2S)-2-hydroxy-3-oxobutyl phosphate</name>
        <dbReference type="ChEBI" id="CHEBI:58830"/>
    </ligand>
</feature>
<feature type="binding site" evidence="1">
    <location>
        <position position="114"/>
    </location>
    <ligand>
        <name>5-amino-6-(D-ribitylamino)uracil</name>
        <dbReference type="ChEBI" id="CHEBI:15934"/>
    </ligand>
</feature>
<feature type="binding site" evidence="1">
    <location>
        <position position="128"/>
    </location>
    <ligand>
        <name>(2S)-2-hydroxy-3-oxobutyl phosphate</name>
        <dbReference type="ChEBI" id="CHEBI:58830"/>
    </ligand>
</feature>
<organism>
    <name type="scientific">Vibrio vulnificus (strain CMCP6)</name>
    <dbReference type="NCBI Taxonomy" id="216895"/>
    <lineage>
        <taxon>Bacteria</taxon>
        <taxon>Pseudomonadati</taxon>
        <taxon>Pseudomonadota</taxon>
        <taxon>Gammaproteobacteria</taxon>
        <taxon>Vibrionales</taxon>
        <taxon>Vibrionaceae</taxon>
        <taxon>Vibrio</taxon>
    </lineage>
</organism>